<sequence length="246" mass="28207">MLIKTEGFVLRNRKYGETDSMLVIFTKKVGKINAIAKGARRTKSALLAGVQPFSYSDFVLFKGRSLYTVNQTEPKEIFYNLREDVKRLSYAAYLLELVESVTEEGQTNNRLFNLLGRTLHLMKKEEIELETILRAFELKLMEYSGLKPHLTSCVSCGQTSSNSWRFSSKEGGLICHQCHGIDSFSIKINVLTVKLANYLLAKDMEEIQKLKVNPYLHESLNKVLKQYIMVHLDRVNFNSLEIAKKI</sequence>
<feature type="chain" id="PRO_0000325195" description="DNA repair protein RecO">
    <location>
        <begin position="1"/>
        <end position="246"/>
    </location>
</feature>
<comment type="function">
    <text evidence="1">Involved in DNA repair and RecF pathway recombination.</text>
</comment>
<comment type="similarity">
    <text evidence="1">Belongs to the RecO family.</text>
</comment>
<reference key="1">
    <citation type="journal article" date="2016" name="Genome Announc.">
        <title>Complete genome sequence of Alkaliphilus metalliredigens strain QYMF, an alkaliphilic and metal-reducing bacterium isolated from borax-contaminated leachate ponds.</title>
        <authorList>
            <person name="Hwang C."/>
            <person name="Copeland A."/>
            <person name="Lucas S."/>
            <person name="Lapidus A."/>
            <person name="Barry K."/>
            <person name="Detter J.C."/>
            <person name="Glavina Del Rio T."/>
            <person name="Hammon N."/>
            <person name="Israni S."/>
            <person name="Dalin E."/>
            <person name="Tice H."/>
            <person name="Pitluck S."/>
            <person name="Chertkov O."/>
            <person name="Brettin T."/>
            <person name="Bruce D."/>
            <person name="Han C."/>
            <person name="Schmutz J."/>
            <person name="Larimer F."/>
            <person name="Land M.L."/>
            <person name="Hauser L."/>
            <person name="Kyrpides N."/>
            <person name="Mikhailova N."/>
            <person name="Ye Q."/>
            <person name="Zhou J."/>
            <person name="Richardson P."/>
            <person name="Fields M.W."/>
        </authorList>
    </citation>
    <scope>NUCLEOTIDE SEQUENCE [LARGE SCALE GENOMIC DNA]</scope>
    <source>
        <strain>QYMF</strain>
    </source>
</reference>
<organism>
    <name type="scientific">Alkaliphilus metalliredigens (strain QYMF)</name>
    <dbReference type="NCBI Taxonomy" id="293826"/>
    <lineage>
        <taxon>Bacteria</taxon>
        <taxon>Bacillati</taxon>
        <taxon>Bacillota</taxon>
        <taxon>Clostridia</taxon>
        <taxon>Peptostreptococcales</taxon>
        <taxon>Natronincolaceae</taxon>
        <taxon>Alkaliphilus</taxon>
    </lineage>
</organism>
<dbReference type="EMBL" id="CP000724">
    <property type="protein sequence ID" value="ABR49164.1"/>
    <property type="molecule type" value="Genomic_DNA"/>
</dbReference>
<dbReference type="RefSeq" id="WP_012064131.1">
    <property type="nucleotide sequence ID" value="NC_009633.1"/>
</dbReference>
<dbReference type="SMR" id="A6TSJ6"/>
<dbReference type="STRING" id="293826.Amet_3024"/>
<dbReference type="KEGG" id="amt:Amet_3024"/>
<dbReference type="eggNOG" id="COG1381">
    <property type="taxonomic scope" value="Bacteria"/>
</dbReference>
<dbReference type="HOGENOM" id="CLU_066632_3_0_9"/>
<dbReference type="OrthoDB" id="9797083at2"/>
<dbReference type="Proteomes" id="UP000001572">
    <property type="component" value="Chromosome"/>
</dbReference>
<dbReference type="GO" id="GO:0043590">
    <property type="term" value="C:bacterial nucleoid"/>
    <property type="evidence" value="ECO:0007669"/>
    <property type="project" value="TreeGrafter"/>
</dbReference>
<dbReference type="GO" id="GO:0006310">
    <property type="term" value="P:DNA recombination"/>
    <property type="evidence" value="ECO:0007669"/>
    <property type="project" value="UniProtKB-UniRule"/>
</dbReference>
<dbReference type="GO" id="GO:0006302">
    <property type="term" value="P:double-strand break repair"/>
    <property type="evidence" value="ECO:0007669"/>
    <property type="project" value="TreeGrafter"/>
</dbReference>
<dbReference type="Gene3D" id="2.40.50.140">
    <property type="entry name" value="Nucleic acid-binding proteins"/>
    <property type="match status" value="1"/>
</dbReference>
<dbReference type="Gene3D" id="1.20.1440.120">
    <property type="entry name" value="Recombination protein O, C-terminal domain"/>
    <property type="match status" value="1"/>
</dbReference>
<dbReference type="HAMAP" id="MF_00201">
    <property type="entry name" value="RecO"/>
    <property type="match status" value="1"/>
</dbReference>
<dbReference type="InterPro" id="IPR037278">
    <property type="entry name" value="ARFGAP/RecO"/>
</dbReference>
<dbReference type="InterPro" id="IPR022572">
    <property type="entry name" value="DNA_rep/recomb_RecO_N"/>
</dbReference>
<dbReference type="InterPro" id="IPR012340">
    <property type="entry name" value="NA-bd_OB-fold"/>
</dbReference>
<dbReference type="InterPro" id="IPR003717">
    <property type="entry name" value="RecO"/>
</dbReference>
<dbReference type="InterPro" id="IPR042242">
    <property type="entry name" value="RecO_C"/>
</dbReference>
<dbReference type="NCBIfam" id="TIGR00613">
    <property type="entry name" value="reco"/>
    <property type="match status" value="1"/>
</dbReference>
<dbReference type="PANTHER" id="PTHR33991">
    <property type="entry name" value="DNA REPAIR PROTEIN RECO"/>
    <property type="match status" value="1"/>
</dbReference>
<dbReference type="PANTHER" id="PTHR33991:SF1">
    <property type="entry name" value="DNA REPAIR PROTEIN RECO"/>
    <property type="match status" value="1"/>
</dbReference>
<dbReference type="Pfam" id="PF02565">
    <property type="entry name" value="RecO_C"/>
    <property type="match status" value="1"/>
</dbReference>
<dbReference type="Pfam" id="PF11967">
    <property type="entry name" value="RecO_N"/>
    <property type="match status" value="1"/>
</dbReference>
<dbReference type="SUPFAM" id="SSF57863">
    <property type="entry name" value="ArfGap/RecO-like zinc finger"/>
    <property type="match status" value="1"/>
</dbReference>
<dbReference type="SUPFAM" id="SSF50249">
    <property type="entry name" value="Nucleic acid-binding proteins"/>
    <property type="match status" value="1"/>
</dbReference>
<name>RECO_ALKMQ</name>
<evidence type="ECO:0000255" key="1">
    <source>
        <dbReference type="HAMAP-Rule" id="MF_00201"/>
    </source>
</evidence>
<proteinExistence type="inferred from homology"/>
<gene>
    <name evidence="1" type="primary">recO</name>
    <name type="ordered locus">Amet_3024</name>
</gene>
<keyword id="KW-0227">DNA damage</keyword>
<keyword id="KW-0233">DNA recombination</keyword>
<keyword id="KW-0234">DNA repair</keyword>
<keyword id="KW-1185">Reference proteome</keyword>
<protein>
    <recommendedName>
        <fullName evidence="1">DNA repair protein RecO</fullName>
    </recommendedName>
    <alternativeName>
        <fullName evidence="1">Recombination protein O</fullName>
    </alternativeName>
</protein>
<accession>A6TSJ6</accession>